<accession>P9WEL5</accession>
<comment type="function">
    <text evidence="2">Cytochrome P450 monooxygenase-like protein; part of the cluster that mediates the biosynthesis of a highly modified cyclo-arginine-tryptophan dipeptide (cRW) (PubMed:36702957). The first step of the pathway is perfornmed by the arginine-containing cyclodipeptide synthase (RCPDS) avaA that acts as the scaffold-generating enzyme and is responsible for formation of the cyclo-Arg-Trp (cRW) diketopiperazine. AvaB then acts as a multifunctional flavoenzyme that is responsible for generating the cyclo-Arg-formylkynurenine DKP, which can be deformylated by avaC. AvaB then further catalyzes an additional N-oxidation followed by cyclization and dehydration. The next step is an N-acetylation of the guanidine group catalyzed by the arginine N-acetyltransferase avaD. The roles of the additional enzymes identified within the ava cluster still have to be determined (PubMed:36702957).</text>
</comment>
<comment type="pathway">
    <text evidence="5">Secondary metabolite biosynthesis.</text>
</comment>
<comment type="subcellular location">
    <subcellularLocation>
        <location evidence="1">Membrane</location>
        <topology evidence="1">Single-pass membrane protein</topology>
    </subcellularLocation>
</comment>
<comment type="similarity">
    <text evidence="4">Belongs to the cytochrome P450 family.</text>
</comment>
<comment type="caution">
    <text evidence="4">Lacks the heme-binding cysteine residue and therefore might not act as a functional cytochrome P450 monooxygenase.</text>
</comment>
<organism>
    <name type="scientific">Aspergillus versicolor</name>
    <dbReference type="NCBI Taxonomy" id="46472"/>
    <lineage>
        <taxon>Eukaryota</taxon>
        <taxon>Fungi</taxon>
        <taxon>Dikarya</taxon>
        <taxon>Ascomycota</taxon>
        <taxon>Pezizomycotina</taxon>
        <taxon>Eurotiomycetes</taxon>
        <taxon>Eurotiomycetidae</taxon>
        <taxon>Eurotiales</taxon>
        <taxon>Aspergillaceae</taxon>
        <taxon>Aspergillus</taxon>
        <taxon>Aspergillus subgen. Nidulantes</taxon>
    </lineage>
</organism>
<proteinExistence type="inferred from homology"/>
<sequence length="362" mass="41321">MSVILAIFIAAAGCLFSSWRIYWSPWACFPGPKLAALSSWYEWYWEVYRKGQLNAHLQDLHASYGPVVRYGPKHVHFNDPALYRDVYKWHPSFGKDPAFYGAPKYSSTFRETNISKHAARRQVLSRRFSPAVVRQRMPVIERHCEHLWQKLDRLTQAGRKNFNFFNLCRSFAADLLSTYMSGTTFGCMDDDEQGFDGNFIRAIQHTSDTYFDNRNIFLARWTSLLKMFGYGPPPLDKMLDELTFSDGLVEDYLSAKDSKGKEDTVFAILTQPGAVKDFSPLSKPELMAEGRSLLAAGVNTVGFTLSSTLFYIARDEDVQLRLQTELDTSTPQQTLASLPYMVGNLSIFILSDRLTLYTRPPV</sequence>
<feature type="chain" id="PRO_0000461014" description="Cytochrome P450 monooxygenase-like protein avaN">
    <location>
        <begin position="1"/>
        <end position="362"/>
    </location>
</feature>
<feature type="transmembrane region" description="Helical" evidence="1">
    <location>
        <begin position="3"/>
        <end position="23"/>
    </location>
</feature>
<name>AVAN_ASPVE</name>
<reference key="1">
    <citation type="journal article" date="2023" name="Nat. Chem. Biol.">
        <title>Genome mining for unknown-unknown natural products.</title>
        <authorList>
            <person name="Yee D.A."/>
            <person name="Niwa K."/>
            <person name="Perlatti B."/>
            <person name="Chen M."/>
            <person name="Li Y."/>
            <person name="Tang Y."/>
        </authorList>
    </citation>
    <scope>NUCLEOTIDE SEQUENCE [GENOMIC DNA]</scope>
    <scope>FUNCTION</scope>
    <source>
        <strain>dI-29</strain>
    </source>
</reference>
<protein>
    <recommendedName>
        <fullName evidence="3">Cytochrome P450 monooxygenase-like protein avaN</fullName>
    </recommendedName>
    <alternativeName>
        <fullName evidence="3">Ava biosynthesis cluster protein N</fullName>
    </alternativeName>
</protein>
<evidence type="ECO:0000255" key="1"/>
<evidence type="ECO:0000269" key="2">
    <source>
    </source>
</evidence>
<evidence type="ECO:0000303" key="3">
    <source>
    </source>
</evidence>
<evidence type="ECO:0000305" key="4"/>
<evidence type="ECO:0000305" key="5">
    <source>
    </source>
</evidence>
<dbReference type="EMBL" id="OP596311">
    <property type="protein sequence ID" value="UZP48226.1"/>
    <property type="molecule type" value="Genomic_DNA"/>
</dbReference>
<dbReference type="GO" id="GO:0016020">
    <property type="term" value="C:membrane"/>
    <property type="evidence" value="ECO:0007669"/>
    <property type="project" value="UniProtKB-SubCell"/>
</dbReference>
<dbReference type="GO" id="GO:0020037">
    <property type="term" value="F:heme binding"/>
    <property type="evidence" value="ECO:0007669"/>
    <property type="project" value="InterPro"/>
</dbReference>
<dbReference type="GO" id="GO:0005506">
    <property type="term" value="F:iron ion binding"/>
    <property type="evidence" value="ECO:0007669"/>
    <property type="project" value="InterPro"/>
</dbReference>
<dbReference type="GO" id="GO:0004497">
    <property type="term" value="F:monooxygenase activity"/>
    <property type="evidence" value="ECO:0007669"/>
    <property type="project" value="InterPro"/>
</dbReference>
<dbReference type="GO" id="GO:0016705">
    <property type="term" value="F:oxidoreductase activity, acting on paired donors, with incorporation or reduction of molecular oxygen"/>
    <property type="evidence" value="ECO:0007669"/>
    <property type="project" value="InterPro"/>
</dbReference>
<dbReference type="GO" id="GO:0044550">
    <property type="term" value="P:secondary metabolite biosynthetic process"/>
    <property type="evidence" value="ECO:0007669"/>
    <property type="project" value="UniProtKB-ARBA"/>
</dbReference>
<dbReference type="Gene3D" id="1.10.630.10">
    <property type="entry name" value="Cytochrome P450"/>
    <property type="match status" value="1"/>
</dbReference>
<dbReference type="InterPro" id="IPR001128">
    <property type="entry name" value="Cyt_P450"/>
</dbReference>
<dbReference type="InterPro" id="IPR036396">
    <property type="entry name" value="Cyt_P450_sf"/>
</dbReference>
<dbReference type="InterPro" id="IPR050121">
    <property type="entry name" value="Cytochrome_P450_monoxygenase"/>
</dbReference>
<dbReference type="PANTHER" id="PTHR24305">
    <property type="entry name" value="CYTOCHROME P450"/>
    <property type="match status" value="1"/>
</dbReference>
<dbReference type="PANTHER" id="PTHR24305:SF156">
    <property type="entry name" value="P450, PUTATIVE (EUROFUNG)-RELATED"/>
    <property type="match status" value="1"/>
</dbReference>
<dbReference type="Pfam" id="PF00067">
    <property type="entry name" value="p450"/>
    <property type="match status" value="1"/>
</dbReference>
<dbReference type="SUPFAM" id="SSF48264">
    <property type="entry name" value="Cytochrome P450"/>
    <property type="match status" value="1"/>
</dbReference>
<gene>
    <name evidence="3" type="primary">avaN</name>
</gene>
<keyword id="KW-0472">Membrane</keyword>
<keyword id="KW-0812">Transmembrane</keyword>
<keyword id="KW-1133">Transmembrane helix</keyword>